<name>LACA_STRE4</name>
<reference key="1">
    <citation type="journal article" date="2009" name="PLoS Pathog.">
        <title>Genomic evidence for the evolution of Streptococcus equi: host restriction, increased virulence, and genetic exchange with human pathogens.</title>
        <authorList>
            <person name="Holden M.T.G."/>
            <person name="Heather Z."/>
            <person name="Paillot R."/>
            <person name="Steward K.F."/>
            <person name="Webb K."/>
            <person name="Ainslie F."/>
            <person name="Jourdan T."/>
            <person name="Bason N.C."/>
            <person name="Holroyd N.E."/>
            <person name="Mungall K."/>
            <person name="Quail M.A."/>
            <person name="Sanders M."/>
            <person name="Simmonds M."/>
            <person name="Willey D."/>
            <person name="Brooks K."/>
            <person name="Aanensen D.M."/>
            <person name="Spratt B.G."/>
            <person name="Jolley K.A."/>
            <person name="Maiden M.C.J."/>
            <person name="Kehoe M."/>
            <person name="Chanter N."/>
            <person name="Bentley S.D."/>
            <person name="Robinson C."/>
            <person name="Maskell D.J."/>
            <person name="Parkhill J."/>
            <person name="Waller A.S."/>
        </authorList>
    </citation>
    <scope>NUCLEOTIDE SEQUENCE [LARGE SCALE GENOMIC DNA]</scope>
    <source>
        <strain>4047</strain>
    </source>
</reference>
<comment type="catalytic activity">
    <reaction evidence="1">
        <text>aldehydo-D-galactose 6-phosphate = keto-D-tagatose 6-phosphate</text>
        <dbReference type="Rhea" id="RHEA:13033"/>
        <dbReference type="ChEBI" id="CHEBI:58255"/>
        <dbReference type="ChEBI" id="CHEBI:134283"/>
        <dbReference type="EC" id="5.3.1.26"/>
    </reaction>
</comment>
<comment type="pathway">
    <text evidence="1">Carbohydrate metabolism; D-galactose 6-phosphate degradation; D-tagatose 6-phosphate from D-galactose 6-phosphate: step 1/1.</text>
</comment>
<comment type="subunit">
    <text evidence="1">Heteromultimeric protein consisting of LacA and LacB.</text>
</comment>
<comment type="similarity">
    <text evidence="1">Belongs to the LacAB/RpiB family.</text>
</comment>
<keyword id="KW-0413">Isomerase</keyword>
<keyword id="KW-0423">Lactose metabolism</keyword>
<organism>
    <name type="scientific">Streptococcus equi subsp. equi (strain 4047)</name>
    <dbReference type="NCBI Taxonomy" id="553482"/>
    <lineage>
        <taxon>Bacteria</taxon>
        <taxon>Bacillati</taxon>
        <taxon>Bacillota</taxon>
        <taxon>Bacilli</taxon>
        <taxon>Lactobacillales</taxon>
        <taxon>Streptococcaceae</taxon>
        <taxon>Streptococcus</taxon>
    </lineage>
</organism>
<accession>C0M8Q6</accession>
<sequence>MTIILGADAHGNDLKEAIKGFLQQEGFDVTDVTAIADDFVDNTLAVARALKADEESLGIMIDAYGAGPFMVATKIKGMVAAEVSDERSAYMTRGHNNARMITMGAEIVGQELAKNIAKGFVTGHYDGGRHQIRVDMLNKMA</sequence>
<feature type="chain" id="PRO_1000185396" description="Galactose-6-phosphate isomerase subunit LacA">
    <location>
        <begin position="1"/>
        <end position="141"/>
    </location>
</feature>
<gene>
    <name evidence="1" type="primary">lacA</name>
    <name type="ordered locus">SEQ_0527</name>
</gene>
<dbReference type="EC" id="5.3.1.26" evidence="1"/>
<dbReference type="EMBL" id="FM204883">
    <property type="protein sequence ID" value="CAW92763.1"/>
    <property type="molecule type" value="Genomic_DNA"/>
</dbReference>
<dbReference type="RefSeq" id="WP_012679108.1">
    <property type="nucleotide sequence ID" value="NC_012471.1"/>
</dbReference>
<dbReference type="SMR" id="C0M8Q6"/>
<dbReference type="KEGG" id="seu:SEQ_0527"/>
<dbReference type="HOGENOM" id="CLU_091396_4_2_9"/>
<dbReference type="OrthoDB" id="1778624at2"/>
<dbReference type="UniPathway" id="UPA00702">
    <property type="reaction ID" value="UER00714"/>
</dbReference>
<dbReference type="Proteomes" id="UP000001365">
    <property type="component" value="Chromosome"/>
</dbReference>
<dbReference type="GO" id="GO:0050044">
    <property type="term" value="F:galactose-6-phosphate isomerase activity"/>
    <property type="evidence" value="ECO:0007669"/>
    <property type="project" value="UniProtKB-UniRule"/>
</dbReference>
<dbReference type="GO" id="GO:0004751">
    <property type="term" value="F:ribose-5-phosphate isomerase activity"/>
    <property type="evidence" value="ECO:0007669"/>
    <property type="project" value="TreeGrafter"/>
</dbReference>
<dbReference type="GO" id="GO:0019316">
    <property type="term" value="P:D-allose catabolic process"/>
    <property type="evidence" value="ECO:0007669"/>
    <property type="project" value="TreeGrafter"/>
</dbReference>
<dbReference type="GO" id="GO:0019388">
    <property type="term" value="P:galactose catabolic process"/>
    <property type="evidence" value="ECO:0007669"/>
    <property type="project" value="UniProtKB-UniPathway"/>
</dbReference>
<dbReference type="GO" id="GO:0019512">
    <property type="term" value="P:lactose catabolic process via tagatose-6-phosphate"/>
    <property type="evidence" value="ECO:0007669"/>
    <property type="project" value="UniProtKB-UniRule"/>
</dbReference>
<dbReference type="GO" id="GO:0009052">
    <property type="term" value="P:pentose-phosphate shunt, non-oxidative branch"/>
    <property type="evidence" value="ECO:0007669"/>
    <property type="project" value="TreeGrafter"/>
</dbReference>
<dbReference type="Gene3D" id="3.40.1400.10">
    <property type="entry name" value="Sugar-phosphate isomerase, RpiB/LacA/LacB"/>
    <property type="match status" value="1"/>
</dbReference>
<dbReference type="HAMAP" id="MF_01555">
    <property type="entry name" value="LacA"/>
    <property type="match status" value="1"/>
</dbReference>
<dbReference type="InterPro" id="IPR004783">
    <property type="entry name" value="LacA"/>
</dbReference>
<dbReference type="InterPro" id="IPR003500">
    <property type="entry name" value="RpiB_LacA_LacB"/>
</dbReference>
<dbReference type="InterPro" id="IPR036569">
    <property type="entry name" value="RpiB_LacA_LacB_sf"/>
</dbReference>
<dbReference type="NCBIfam" id="TIGR01118">
    <property type="entry name" value="lacA"/>
    <property type="match status" value="1"/>
</dbReference>
<dbReference type="NCBIfam" id="NF006380">
    <property type="entry name" value="PRK08621.1"/>
    <property type="match status" value="1"/>
</dbReference>
<dbReference type="NCBIfam" id="NF009257">
    <property type="entry name" value="PRK12613.1"/>
    <property type="match status" value="1"/>
</dbReference>
<dbReference type="NCBIfam" id="TIGR00689">
    <property type="entry name" value="rpiB_lacA_lacB"/>
    <property type="match status" value="1"/>
</dbReference>
<dbReference type="PANTHER" id="PTHR30345:SF5">
    <property type="entry name" value="GALACTOSE-6-PHOSPHATE ISOMERASE SUBUNIT LACA"/>
    <property type="match status" value="1"/>
</dbReference>
<dbReference type="PANTHER" id="PTHR30345">
    <property type="entry name" value="RIBOSE-5-PHOSPHATE ISOMERASE B"/>
    <property type="match status" value="1"/>
</dbReference>
<dbReference type="Pfam" id="PF02502">
    <property type="entry name" value="LacAB_rpiB"/>
    <property type="match status" value="1"/>
</dbReference>
<dbReference type="PIRSF" id="PIRSF005384">
    <property type="entry name" value="RpiB_LacA_B"/>
    <property type="match status" value="1"/>
</dbReference>
<dbReference type="SUPFAM" id="SSF89623">
    <property type="entry name" value="Ribose/Galactose isomerase RpiB/AlsB"/>
    <property type="match status" value="1"/>
</dbReference>
<protein>
    <recommendedName>
        <fullName evidence="1">Galactose-6-phosphate isomerase subunit LacA</fullName>
        <ecNumber evidence="1">5.3.1.26</ecNumber>
    </recommendedName>
</protein>
<evidence type="ECO:0000255" key="1">
    <source>
        <dbReference type="HAMAP-Rule" id="MF_01555"/>
    </source>
</evidence>
<proteinExistence type="inferred from homology"/>